<organism>
    <name type="scientific">Mus musculus</name>
    <name type="common">Mouse</name>
    <dbReference type="NCBI Taxonomy" id="10090"/>
    <lineage>
        <taxon>Eukaryota</taxon>
        <taxon>Metazoa</taxon>
        <taxon>Chordata</taxon>
        <taxon>Craniata</taxon>
        <taxon>Vertebrata</taxon>
        <taxon>Euteleostomi</taxon>
        <taxon>Mammalia</taxon>
        <taxon>Eutheria</taxon>
        <taxon>Euarchontoglires</taxon>
        <taxon>Glires</taxon>
        <taxon>Rodentia</taxon>
        <taxon>Myomorpha</taxon>
        <taxon>Muroidea</taxon>
        <taxon>Muridae</taxon>
        <taxon>Murinae</taxon>
        <taxon>Mus</taxon>
        <taxon>Mus</taxon>
    </lineage>
</organism>
<name>SCD2_MOUSE</name>
<feature type="chain" id="PRO_0000185398" description="Stearoyl-CoA desaturase 2">
    <location>
        <begin position="1"/>
        <end position="358"/>
    </location>
</feature>
<feature type="topological domain" description="Cytoplasmic" evidence="2">
    <location>
        <begin position="1"/>
        <end position="71"/>
    </location>
</feature>
<feature type="transmembrane region" description="Helical" evidence="1">
    <location>
        <begin position="72"/>
        <end position="92"/>
    </location>
</feature>
<feature type="topological domain" description="Lumenal" evidence="2">
    <location>
        <begin position="93"/>
        <end position="96"/>
    </location>
</feature>
<feature type="transmembrane region" description="Helical" evidence="1">
    <location>
        <begin position="97"/>
        <end position="117"/>
    </location>
</feature>
<feature type="topological domain" description="Cytoplasmic" evidence="2">
    <location>
        <begin position="118"/>
        <end position="216"/>
    </location>
</feature>
<feature type="transmembrane region" description="Helical" evidence="1">
    <location>
        <begin position="217"/>
        <end position="236"/>
    </location>
</feature>
<feature type="topological domain" description="Lumenal" evidence="2">
    <location>
        <begin position="237"/>
        <end position="240"/>
    </location>
</feature>
<feature type="transmembrane region" description="Helical" evidence="1">
    <location>
        <begin position="241"/>
        <end position="262"/>
    </location>
</feature>
<feature type="topological domain" description="Cytoplasmic" evidence="2">
    <location>
        <begin position="263"/>
        <end position="358"/>
    </location>
</feature>
<feature type="region of interest" description="Disordered" evidence="3">
    <location>
        <begin position="16"/>
        <end position="39"/>
    </location>
</feature>
<feature type="short sequence motif" description="Histidine box-1" evidence="10">
    <location>
        <begin position="119"/>
        <end position="124"/>
    </location>
</feature>
<feature type="short sequence motif" description="Histidine box-2" evidence="10">
    <location>
        <begin position="156"/>
        <end position="160"/>
    </location>
</feature>
<feature type="short sequence motif" description="Histidine box-3" evidence="10">
    <location>
        <begin position="297"/>
        <end position="301"/>
    </location>
</feature>
<feature type="binding site" evidence="1">
    <location>
        <position position="74"/>
    </location>
    <ligand>
        <name>substrate</name>
    </ligand>
</feature>
<feature type="binding site" evidence="2">
    <location>
        <position position="119"/>
    </location>
    <ligand>
        <name>Fe cation</name>
        <dbReference type="ChEBI" id="CHEBI:24875"/>
        <label>1</label>
    </ligand>
</feature>
<feature type="binding site" evidence="2">
    <location>
        <position position="124"/>
    </location>
    <ligand>
        <name>Fe cation</name>
        <dbReference type="ChEBI" id="CHEBI:24875"/>
        <label>1</label>
    </ligand>
</feature>
<feature type="binding site" evidence="1">
    <location>
        <position position="147"/>
    </location>
    <ligand>
        <name>substrate</name>
    </ligand>
</feature>
<feature type="binding site" evidence="1">
    <location>
        <position position="154"/>
    </location>
    <ligand>
        <name>substrate</name>
    </ligand>
</feature>
<feature type="binding site" evidence="1">
    <location>
        <position position="155"/>
    </location>
    <ligand>
        <name>substrate</name>
    </ligand>
</feature>
<feature type="binding site" evidence="2">
    <location>
        <position position="156"/>
    </location>
    <ligand>
        <name>Fe cation</name>
        <dbReference type="ChEBI" id="CHEBI:24875"/>
        <label>1</label>
    </ligand>
</feature>
<feature type="binding site" evidence="2">
    <location>
        <position position="159"/>
    </location>
    <ligand>
        <name>Fe cation</name>
        <dbReference type="ChEBI" id="CHEBI:24875"/>
        <label>2</label>
    </ligand>
</feature>
<feature type="binding site" evidence="2">
    <location>
        <position position="160"/>
    </location>
    <ligand>
        <name>Fe cation</name>
        <dbReference type="ChEBI" id="CHEBI:24875"/>
        <label>1</label>
    </ligand>
</feature>
<feature type="binding site" evidence="1">
    <location>
        <position position="187"/>
    </location>
    <ligand>
        <name>substrate</name>
    </ligand>
</feature>
<feature type="binding site" evidence="1">
    <location>
        <position position="188"/>
    </location>
    <ligand>
        <name>substrate</name>
    </ligand>
</feature>
<feature type="binding site" evidence="1">
    <location>
        <position position="261"/>
    </location>
    <ligand>
        <name>substrate</name>
    </ligand>
</feature>
<feature type="binding site" evidence="2">
    <location>
        <position position="268"/>
    </location>
    <ligand>
        <name>Fe cation</name>
        <dbReference type="ChEBI" id="CHEBI:24875"/>
        <label>2</label>
    </ligand>
</feature>
<feature type="binding site" evidence="2">
    <location>
        <position position="297"/>
    </location>
    <ligand>
        <name>Fe cation</name>
        <dbReference type="ChEBI" id="CHEBI:24875"/>
        <label>2</label>
    </ligand>
</feature>
<feature type="binding site" evidence="2">
    <location>
        <position position="300"/>
    </location>
    <ligand>
        <name>Fe cation</name>
        <dbReference type="ChEBI" id="CHEBI:24875"/>
        <label>1</label>
    </ligand>
</feature>
<feature type="binding site" evidence="2">
    <location>
        <position position="301"/>
    </location>
    <ligand>
        <name>Fe cation</name>
        <dbReference type="ChEBI" id="CHEBI:24875"/>
        <label>2</label>
    </ligand>
</feature>
<feature type="sequence conflict" description="In Ref. 1; AAA40094." evidence="10" ref="1">
    <original>G</original>
    <variation>D</variation>
    <location>
        <position position="220"/>
    </location>
</feature>
<feature type="sequence conflict" description="In Ref. 1; AAA40094." evidence="10" ref="1">
    <original>G</original>
    <variation>R</variation>
    <location>
        <position position="295"/>
    </location>
</feature>
<keyword id="KW-0256">Endoplasmic reticulum</keyword>
<keyword id="KW-0275">Fatty acid biosynthesis</keyword>
<keyword id="KW-0276">Fatty acid metabolism</keyword>
<keyword id="KW-0408">Iron</keyword>
<keyword id="KW-0444">Lipid biosynthesis</keyword>
<keyword id="KW-0443">Lipid metabolism</keyword>
<keyword id="KW-0472">Membrane</keyword>
<keyword id="KW-0479">Metal-binding</keyword>
<keyword id="KW-0492">Microsome</keyword>
<keyword id="KW-0560">Oxidoreductase</keyword>
<keyword id="KW-1185">Reference proteome</keyword>
<keyword id="KW-0812">Transmembrane</keyword>
<keyword id="KW-1133">Transmembrane helix</keyword>
<gene>
    <name type="primary">Scd2</name>
</gene>
<comment type="function">
    <text evidence="6 7">Stearoyl-CoA desaturase that utilizes O(2) and electrons from reduced cytochrome b5 to introduce the first double bond into saturated fatty acyl-CoA substrates (PubMed:16443825). Catalyzes the insertion of a cis double bond at the delta-9 position into fatty acyl-CoA substrates including palmitoyl-CoA and stearoyl-CoA (PubMed:16443825). Gives rise to a mixture of 16:1 and 18:1 unsaturated fatty acids (PubMed:16443825). Contributes to the biosynthesis of membrane phospholipids, cholesterol esters and triglycerides, especially during embryonic development and in neonates (PubMed:16118274). Important for normal permeability barrier function of the skin in neonates (PubMed:16118274).</text>
</comment>
<comment type="catalytic activity">
    <reaction evidence="7 11">
        <text>octadecanoyl-CoA + 2 Fe(II)-[cytochrome b5] + O2 + 2 H(+) = (9Z)-octadecenoyl-CoA + 2 Fe(III)-[cytochrome b5] + 2 H2O</text>
        <dbReference type="Rhea" id="RHEA:19721"/>
        <dbReference type="Rhea" id="RHEA-COMP:10438"/>
        <dbReference type="Rhea" id="RHEA-COMP:10439"/>
        <dbReference type="ChEBI" id="CHEBI:15377"/>
        <dbReference type="ChEBI" id="CHEBI:15378"/>
        <dbReference type="ChEBI" id="CHEBI:15379"/>
        <dbReference type="ChEBI" id="CHEBI:29033"/>
        <dbReference type="ChEBI" id="CHEBI:29034"/>
        <dbReference type="ChEBI" id="CHEBI:57387"/>
        <dbReference type="ChEBI" id="CHEBI:57394"/>
        <dbReference type="EC" id="1.14.19.1"/>
    </reaction>
    <physiologicalReaction direction="left-to-right" evidence="11 12">
        <dbReference type="Rhea" id="RHEA:19722"/>
    </physiologicalReaction>
</comment>
<comment type="catalytic activity">
    <reaction evidence="7">
        <text>hexadecanoyl-CoA + 2 Fe(II)-[cytochrome b5] + O2 + 2 H(+) = (9Z)-hexadecenoyl-CoA + 2 Fe(III)-[cytochrome b5] + 2 H2O</text>
        <dbReference type="Rhea" id="RHEA:36931"/>
        <dbReference type="Rhea" id="RHEA-COMP:10438"/>
        <dbReference type="Rhea" id="RHEA-COMP:10439"/>
        <dbReference type="ChEBI" id="CHEBI:15377"/>
        <dbReference type="ChEBI" id="CHEBI:15378"/>
        <dbReference type="ChEBI" id="CHEBI:15379"/>
        <dbReference type="ChEBI" id="CHEBI:29033"/>
        <dbReference type="ChEBI" id="CHEBI:29034"/>
        <dbReference type="ChEBI" id="CHEBI:57379"/>
        <dbReference type="ChEBI" id="CHEBI:61540"/>
    </reaction>
    <physiologicalReaction direction="left-to-right" evidence="12">
        <dbReference type="Rhea" id="RHEA:36932"/>
    </physiologicalReaction>
</comment>
<comment type="cofactor">
    <cofactor evidence="2">
        <name>Fe(2+)</name>
        <dbReference type="ChEBI" id="CHEBI:29033"/>
    </cofactor>
    <text evidence="2">Expected to bind 2 Fe(2+) ions per subunit.</text>
</comment>
<comment type="subcellular location">
    <subcellularLocation>
        <location evidence="12">Endoplasmic reticulum membrane</location>
        <topology evidence="12">Multi-pass membrane protein</topology>
    </subcellularLocation>
    <subcellularLocation>
        <location evidence="7">Microsome membrane</location>
    </subcellularLocation>
</comment>
<comment type="tissue specificity">
    <text evidence="4 5 6">Detected in brain and skin (PubMed:10545940, PubMed:11161812, PubMed:16118274). Highly expressed in brain, and detected at low levels in heart, stomach, lung and testis (PubMed:11161812, PubMed:12815040). Detected both in dermis and epidermis (PubMed:16118274).</text>
</comment>
<comment type="developmental stage">
    <text evidence="6">Highly expressed during embryonic development and during the first three weeks after birth. Expression is low in adults.</text>
</comment>
<comment type="induction">
    <text evidence="5">Up-regulated by agonists that activate NR1H3 (PubMed:12815040). Slightly down-regulated by a high-carbohydrate diet enriched in unsaturated fatty acids (PubMed:12815040).</text>
</comment>
<comment type="domain">
    <text evidence="1">The histidine box domains are involved in binding the catalytic metal ions.</text>
</comment>
<comment type="disruption phenotype">
    <text evidence="6">Mutant mice are born at the expected Mendelian rate. Neonates are smaller than wild-type and present high mortality, ranging from 70 to 100%, depending on the genetic background. Neonates display a shiny skin, but after a few hours their skin appears dry and cracked. The permeability barrier function of their skin is impaired, leading to rapid weight loss due to dehydration. Their epidermis has decreased levels of cholesterol esters, triglycerides, acylceramide, and glucosylacylceramide containing unsaturated fatty acids. In mutant neonates, triglyceride levels in liver and blood plasma are reduced by half, due to strongly reduced levels of stearoyl-CoA desaturase activity in the liver and strongly reduced levels of triglyceride biosynthesis. In contrast, the levels of stearoyl-CoA desaturase activity are normal in adult mice deficient for Scd2. Adult mice display kinked tails.</text>
</comment>
<comment type="similarity">
    <text evidence="10">Belongs to the fatty acid desaturase type 1 family.</text>
</comment>
<protein>
    <recommendedName>
        <fullName evidence="8">Stearoyl-CoA desaturase 2</fullName>
        <ecNumber evidence="7 11">1.14.19.1</ecNumber>
    </recommendedName>
    <alternativeName>
        <fullName>Acyl-CoA desaturase 2</fullName>
    </alternativeName>
    <alternativeName>
        <fullName>Delta(9)-desaturase 2</fullName>
        <shortName evidence="9">Delta-9 desaturase 2</shortName>
    </alternativeName>
    <alternativeName>
        <fullName>Fatty acid desaturase 2</fullName>
    </alternativeName>
</protein>
<evidence type="ECO:0000250" key="1">
    <source>
        <dbReference type="UniProtKB" id="O00767"/>
    </source>
</evidence>
<evidence type="ECO:0000250" key="2">
    <source>
        <dbReference type="UniProtKB" id="P13516"/>
    </source>
</evidence>
<evidence type="ECO:0000256" key="3">
    <source>
        <dbReference type="SAM" id="MobiDB-lite"/>
    </source>
</evidence>
<evidence type="ECO:0000269" key="4">
    <source>
    </source>
</evidence>
<evidence type="ECO:0000269" key="5">
    <source>
    </source>
</evidence>
<evidence type="ECO:0000269" key="6">
    <source>
    </source>
</evidence>
<evidence type="ECO:0000269" key="7">
    <source>
    </source>
</evidence>
<evidence type="ECO:0000303" key="8">
    <source>
    </source>
</evidence>
<evidence type="ECO:0000303" key="9">
    <source>
    </source>
</evidence>
<evidence type="ECO:0000305" key="10"/>
<evidence type="ECO:0000305" key="11">
    <source>
    </source>
</evidence>
<evidence type="ECO:0000305" key="12">
    <source>
    </source>
</evidence>
<reference key="1">
    <citation type="journal article" date="1989" name="J. Biol. Chem.">
        <title>Differentiation-induced gene expression in 3T3-L1 preadipocytes. A second differentially expressed gene encoding stearoyl-CoA desaturase.</title>
        <authorList>
            <person name="Kaestner K.H."/>
            <person name="Ntambi J.M."/>
            <person name="Kelly T.J. Jr."/>
            <person name="Lane M.D."/>
        </authorList>
    </citation>
    <scope>NUCLEOTIDE SEQUENCE [MRNA]</scope>
    <source>
        <tissue>Adipocyte</tissue>
    </source>
</reference>
<reference key="2">
    <citation type="journal article" date="2005" name="Science">
        <title>The transcriptional landscape of the mammalian genome.</title>
        <authorList>
            <person name="Carninci P."/>
            <person name="Kasukawa T."/>
            <person name="Katayama S."/>
            <person name="Gough J."/>
            <person name="Frith M.C."/>
            <person name="Maeda N."/>
            <person name="Oyama R."/>
            <person name="Ravasi T."/>
            <person name="Lenhard B."/>
            <person name="Wells C."/>
            <person name="Kodzius R."/>
            <person name="Shimokawa K."/>
            <person name="Bajic V.B."/>
            <person name="Brenner S.E."/>
            <person name="Batalov S."/>
            <person name="Forrest A.R."/>
            <person name="Zavolan M."/>
            <person name="Davis M.J."/>
            <person name="Wilming L.G."/>
            <person name="Aidinis V."/>
            <person name="Allen J.E."/>
            <person name="Ambesi-Impiombato A."/>
            <person name="Apweiler R."/>
            <person name="Aturaliya R.N."/>
            <person name="Bailey T.L."/>
            <person name="Bansal M."/>
            <person name="Baxter L."/>
            <person name="Beisel K.W."/>
            <person name="Bersano T."/>
            <person name="Bono H."/>
            <person name="Chalk A.M."/>
            <person name="Chiu K.P."/>
            <person name="Choudhary V."/>
            <person name="Christoffels A."/>
            <person name="Clutterbuck D.R."/>
            <person name="Crowe M.L."/>
            <person name="Dalla E."/>
            <person name="Dalrymple B.P."/>
            <person name="de Bono B."/>
            <person name="Della Gatta G."/>
            <person name="di Bernardo D."/>
            <person name="Down T."/>
            <person name="Engstrom P."/>
            <person name="Fagiolini M."/>
            <person name="Faulkner G."/>
            <person name="Fletcher C.F."/>
            <person name="Fukushima T."/>
            <person name="Furuno M."/>
            <person name="Futaki S."/>
            <person name="Gariboldi M."/>
            <person name="Georgii-Hemming P."/>
            <person name="Gingeras T.R."/>
            <person name="Gojobori T."/>
            <person name="Green R.E."/>
            <person name="Gustincich S."/>
            <person name="Harbers M."/>
            <person name="Hayashi Y."/>
            <person name="Hensch T.K."/>
            <person name="Hirokawa N."/>
            <person name="Hill D."/>
            <person name="Huminiecki L."/>
            <person name="Iacono M."/>
            <person name="Ikeo K."/>
            <person name="Iwama A."/>
            <person name="Ishikawa T."/>
            <person name="Jakt M."/>
            <person name="Kanapin A."/>
            <person name="Katoh M."/>
            <person name="Kawasawa Y."/>
            <person name="Kelso J."/>
            <person name="Kitamura H."/>
            <person name="Kitano H."/>
            <person name="Kollias G."/>
            <person name="Krishnan S.P."/>
            <person name="Kruger A."/>
            <person name="Kummerfeld S.K."/>
            <person name="Kurochkin I.V."/>
            <person name="Lareau L.F."/>
            <person name="Lazarevic D."/>
            <person name="Lipovich L."/>
            <person name="Liu J."/>
            <person name="Liuni S."/>
            <person name="McWilliam S."/>
            <person name="Madan Babu M."/>
            <person name="Madera M."/>
            <person name="Marchionni L."/>
            <person name="Matsuda H."/>
            <person name="Matsuzawa S."/>
            <person name="Miki H."/>
            <person name="Mignone F."/>
            <person name="Miyake S."/>
            <person name="Morris K."/>
            <person name="Mottagui-Tabar S."/>
            <person name="Mulder N."/>
            <person name="Nakano N."/>
            <person name="Nakauchi H."/>
            <person name="Ng P."/>
            <person name="Nilsson R."/>
            <person name="Nishiguchi S."/>
            <person name="Nishikawa S."/>
            <person name="Nori F."/>
            <person name="Ohara O."/>
            <person name="Okazaki Y."/>
            <person name="Orlando V."/>
            <person name="Pang K.C."/>
            <person name="Pavan W.J."/>
            <person name="Pavesi G."/>
            <person name="Pesole G."/>
            <person name="Petrovsky N."/>
            <person name="Piazza S."/>
            <person name="Reed J."/>
            <person name="Reid J.F."/>
            <person name="Ring B.Z."/>
            <person name="Ringwald M."/>
            <person name="Rost B."/>
            <person name="Ruan Y."/>
            <person name="Salzberg S.L."/>
            <person name="Sandelin A."/>
            <person name="Schneider C."/>
            <person name="Schoenbach C."/>
            <person name="Sekiguchi K."/>
            <person name="Semple C.A."/>
            <person name="Seno S."/>
            <person name="Sessa L."/>
            <person name="Sheng Y."/>
            <person name="Shibata Y."/>
            <person name="Shimada H."/>
            <person name="Shimada K."/>
            <person name="Silva D."/>
            <person name="Sinclair B."/>
            <person name="Sperling S."/>
            <person name="Stupka E."/>
            <person name="Sugiura K."/>
            <person name="Sultana R."/>
            <person name="Takenaka Y."/>
            <person name="Taki K."/>
            <person name="Tammoja K."/>
            <person name="Tan S.L."/>
            <person name="Tang S."/>
            <person name="Taylor M.S."/>
            <person name="Tegner J."/>
            <person name="Teichmann S.A."/>
            <person name="Ueda H.R."/>
            <person name="van Nimwegen E."/>
            <person name="Verardo R."/>
            <person name="Wei C.L."/>
            <person name="Yagi K."/>
            <person name="Yamanishi H."/>
            <person name="Zabarovsky E."/>
            <person name="Zhu S."/>
            <person name="Zimmer A."/>
            <person name="Hide W."/>
            <person name="Bult C."/>
            <person name="Grimmond S.M."/>
            <person name="Teasdale R.D."/>
            <person name="Liu E.T."/>
            <person name="Brusic V."/>
            <person name="Quackenbush J."/>
            <person name="Wahlestedt C."/>
            <person name="Mattick J.S."/>
            <person name="Hume D.A."/>
            <person name="Kai C."/>
            <person name="Sasaki D."/>
            <person name="Tomaru Y."/>
            <person name="Fukuda S."/>
            <person name="Kanamori-Katayama M."/>
            <person name="Suzuki M."/>
            <person name="Aoki J."/>
            <person name="Arakawa T."/>
            <person name="Iida J."/>
            <person name="Imamura K."/>
            <person name="Itoh M."/>
            <person name="Kato T."/>
            <person name="Kawaji H."/>
            <person name="Kawagashira N."/>
            <person name="Kawashima T."/>
            <person name="Kojima M."/>
            <person name="Kondo S."/>
            <person name="Konno H."/>
            <person name="Nakano K."/>
            <person name="Ninomiya N."/>
            <person name="Nishio T."/>
            <person name="Okada M."/>
            <person name="Plessy C."/>
            <person name="Shibata K."/>
            <person name="Shiraki T."/>
            <person name="Suzuki S."/>
            <person name="Tagami M."/>
            <person name="Waki K."/>
            <person name="Watahiki A."/>
            <person name="Okamura-Oho Y."/>
            <person name="Suzuki H."/>
            <person name="Kawai J."/>
            <person name="Hayashizaki Y."/>
        </authorList>
    </citation>
    <scope>NUCLEOTIDE SEQUENCE [LARGE SCALE MRNA]</scope>
    <source>
        <strain>C57BL/6J</strain>
        <tissue>Brain</tissue>
        <tissue>Spinal ganglion</tissue>
    </source>
</reference>
<reference key="3">
    <citation type="submission" date="2005-07" db="EMBL/GenBank/DDBJ databases">
        <authorList>
            <person name="Mural R.J."/>
            <person name="Adams M.D."/>
            <person name="Myers E.W."/>
            <person name="Smith H.O."/>
            <person name="Venter J.C."/>
        </authorList>
    </citation>
    <scope>NUCLEOTIDE SEQUENCE [LARGE SCALE GENOMIC DNA]</scope>
</reference>
<reference key="4">
    <citation type="journal article" date="2004" name="Genome Res.">
        <title>The status, quality, and expansion of the NIH full-length cDNA project: the Mammalian Gene Collection (MGC).</title>
        <authorList>
            <consortium name="The MGC Project Team"/>
        </authorList>
    </citation>
    <scope>NUCLEOTIDE SEQUENCE [LARGE SCALE MRNA]</scope>
    <source>
        <strain>129</strain>
        <tissue>Mammary tumor</tissue>
    </source>
</reference>
<reference key="5">
    <citation type="journal article" date="1999" name="Nat. Genet.">
        <title>Scd1 is expressed in sebaceous glands and is disrupted in the asebia mouse.</title>
        <authorList>
            <person name="Zheng Y."/>
            <person name="Eilertsen K.J."/>
            <person name="Ge L."/>
            <person name="Zhang L."/>
            <person name="Sundberg J.P."/>
            <person name="Prouty S.M."/>
            <person name="Stenn K.S."/>
            <person name="Parimoo S."/>
        </authorList>
    </citation>
    <scope>TISSUE SPECIFICITY</scope>
</reference>
<reference key="6">
    <citation type="journal article" date="2001" name="Genomics">
        <title>Scd3--a novel gene of the stearoyl-CoA desaturase family with restricted expression in skin.</title>
        <authorList>
            <person name="Zheng Y."/>
            <person name="Prouty S.M."/>
            <person name="Harmon A."/>
            <person name="Sundberg J.P."/>
            <person name="Stenn K.S."/>
            <person name="Parimoo S."/>
        </authorList>
    </citation>
    <scope>TISSUE SPECIFICITY</scope>
</reference>
<reference key="7">
    <citation type="journal article" date="2003" name="J. Biol. Chem.">
        <title>Identification and characterization of murine SCD4, a novel heart-specific stearoyl-CoA desaturase isoform regulated by leptin and dietary factors.</title>
        <authorList>
            <person name="Miyazaki M."/>
            <person name="Jacobson M.J."/>
            <person name="Man W.C."/>
            <person name="Cohen P."/>
            <person name="Asilmaz E."/>
            <person name="Friedman J.M."/>
            <person name="Ntambi J.M."/>
        </authorList>
    </citation>
    <scope>INDUCTION BY UNSATURATED FATTY ACIDS AND NR1H3</scope>
    <scope>TISSUE SPECIFICITY</scope>
</reference>
<reference key="8">
    <citation type="journal article" date="2005" name="Proc. Natl. Acad. Sci. U.S.A.">
        <title>Stearoyl-CoA desaturase-2 gene expression is required for lipid synthesis during early skin and liver development.</title>
        <authorList>
            <person name="Miyazaki M."/>
            <person name="Dobrzyn A."/>
            <person name="Elias P.M."/>
            <person name="Ntambi J.M."/>
        </authorList>
    </citation>
    <scope>FUNCTION</scope>
    <scope>CATALYTIC ACTIVITY</scope>
    <scope>DISRUPTION PHENOTYPE</scope>
    <scope>TISSUE SPECIFICITY</scope>
</reference>
<reference key="9">
    <citation type="journal article" date="2006" name="J. Lipid Res.">
        <title>Identification of mouse palmitoyl-coenzyme A Delta9-desaturase.</title>
        <authorList>
            <person name="Miyazaki M."/>
            <person name="Bruggink S.M."/>
            <person name="Ntambi J.M."/>
        </authorList>
    </citation>
    <scope>FUNCTION</scope>
    <scope>CATALYTIC ACTIVITY</scope>
    <scope>SUBCELLULAR LOCATION</scope>
</reference>
<proteinExistence type="evidence at protein level"/>
<sequence>MPAHILQEISGAYSATTTITAPPSGGQQNGGEKFEKSSHHWGADVRPELKDDLYDPTYQDDEGPPPKLEYVWRNIILMALLHLGALYGITLVPSCKLYTCLFAYLYYVISALGITAGAHRLWSHRTYKARLPLRLFLIIANTMAFQNDVYEWARDHRAHHKFSETHADPHNSRRGFFFSHVGWLLVRKHPAVKEKGGKLDMSDLKAEKLVMFQRRYYKPGLLLMCFVLPTLVPWYCWGETFVNSLCVSTFLRYAVVLNATWLVNSAAHLYGYRPYDKNISSRENILVSMGAVGEGFHNYHHAFPYDYSASEYRWHINFTTFFIDCMALLGLAYDRKRVSRAAVLARIKRTGDGSCKSG</sequence>
<accession>P13011</accession>
<accession>Q8BH96</accession>
<dbReference type="EC" id="1.14.19.1" evidence="7 11"/>
<dbReference type="EMBL" id="M26270">
    <property type="protein sequence ID" value="AAA40094.1"/>
    <property type="molecule type" value="mRNA"/>
</dbReference>
<dbReference type="EMBL" id="AK083922">
    <property type="protein sequence ID" value="BAC39066.1"/>
    <property type="molecule type" value="mRNA"/>
</dbReference>
<dbReference type="EMBL" id="AK147406">
    <property type="protein sequence ID" value="BAE27893.1"/>
    <property type="molecule type" value="mRNA"/>
</dbReference>
<dbReference type="EMBL" id="CH466534">
    <property type="protein sequence ID" value="EDL41928.1"/>
    <property type="molecule type" value="Genomic_DNA"/>
</dbReference>
<dbReference type="EMBL" id="BC040384">
    <property type="protein sequence ID" value="AAH40384.1"/>
    <property type="molecule type" value="mRNA"/>
</dbReference>
<dbReference type="CCDS" id="CCDS29848.1"/>
<dbReference type="PIR" id="A36507">
    <property type="entry name" value="A36507"/>
</dbReference>
<dbReference type="RefSeq" id="NP_033154.2">
    <property type="nucleotide sequence ID" value="NM_009128.2"/>
</dbReference>
<dbReference type="SMR" id="P13011"/>
<dbReference type="BioGRID" id="203089">
    <property type="interactions" value="5"/>
</dbReference>
<dbReference type="FunCoup" id="P13011">
    <property type="interactions" value="779"/>
</dbReference>
<dbReference type="IntAct" id="P13011">
    <property type="interactions" value="1"/>
</dbReference>
<dbReference type="MINT" id="P13011"/>
<dbReference type="STRING" id="10090.ENSMUSP00000026221"/>
<dbReference type="iPTMnet" id="P13011"/>
<dbReference type="PhosphoSitePlus" id="P13011"/>
<dbReference type="SwissPalm" id="P13011"/>
<dbReference type="jPOST" id="P13011"/>
<dbReference type="PaxDb" id="10090-ENSMUSP00000026221"/>
<dbReference type="PeptideAtlas" id="P13011"/>
<dbReference type="ProteomicsDB" id="285646"/>
<dbReference type="Pumba" id="P13011"/>
<dbReference type="DNASU" id="20250"/>
<dbReference type="Ensembl" id="ENSMUST00000026221.7">
    <property type="protein sequence ID" value="ENSMUSP00000026221.6"/>
    <property type="gene ID" value="ENSMUSG00000025203.7"/>
</dbReference>
<dbReference type="GeneID" id="20250"/>
<dbReference type="KEGG" id="mmu:20250"/>
<dbReference type="UCSC" id="uc008hpp.2">
    <property type="organism name" value="mouse"/>
</dbReference>
<dbReference type="AGR" id="MGI:98240"/>
<dbReference type="CTD" id="20250"/>
<dbReference type="MGI" id="MGI:98240">
    <property type="gene designation" value="Scd2"/>
</dbReference>
<dbReference type="VEuPathDB" id="HostDB:ENSMUSG00000025203"/>
<dbReference type="eggNOG" id="KOG1600">
    <property type="taxonomic scope" value="Eukaryota"/>
</dbReference>
<dbReference type="GeneTree" id="ENSGT00940000154908"/>
<dbReference type="HOGENOM" id="CLU_027359_0_0_1"/>
<dbReference type="InParanoid" id="P13011"/>
<dbReference type="OMA" id="LWILYPR"/>
<dbReference type="OrthoDB" id="10260134at2759"/>
<dbReference type="PhylomeDB" id="P13011"/>
<dbReference type="TreeFam" id="TF313251"/>
<dbReference type="BRENDA" id="1.14.19.1">
    <property type="organism ID" value="3474"/>
</dbReference>
<dbReference type="Reactome" id="R-MMU-75105">
    <property type="pathway name" value="Fatty acyl-CoA biosynthesis"/>
</dbReference>
<dbReference type="BioGRID-ORCS" id="20250">
    <property type="hits" value="12 hits in 81 CRISPR screens"/>
</dbReference>
<dbReference type="ChiTaRS" id="Scd2">
    <property type="organism name" value="mouse"/>
</dbReference>
<dbReference type="PRO" id="PR:P13011"/>
<dbReference type="Proteomes" id="UP000000589">
    <property type="component" value="Chromosome 19"/>
</dbReference>
<dbReference type="RNAct" id="P13011">
    <property type="molecule type" value="protein"/>
</dbReference>
<dbReference type="Bgee" id="ENSMUSG00000025203">
    <property type="expression patterns" value="Expressed in migratory enteric neural crest cell and 271 other cell types or tissues"/>
</dbReference>
<dbReference type="ExpressionAtlas" id="P13011">
    <property type="expression patterns" value="baseline and differential"/>
</dbReference>
<dbReference type="GO" id="GO:0005783">
    <property type="term" value="C:endoplasmic reticulum"/>
    <property type="evidence" value="ECO:0000314"/>
    <property type="project" value="MGI"/>
</dbReference>
<dbReference type="GO" id="GO:0005789">
    <property type="term" value="C:endoplasmic reticulum membrane"/>
    <property type="evidence" value="ECO:0007669"/>
    <property type="project" value="UniProtKB-SubCell"/>
</dbReference>
<dbReference type="GO" id="GO:0046872">
    <property type="term" value="F:metal ion binding"/>
    <property type="evidence" value="ECO:0007669"/>
    <property type="project" value="UniProtKB-KW"/>
</dbReference>
<dbReference type="GO" id="GO:0032896">
    <property type="term" value="F:palmitoyl-CoA 9-desaturase activity"/>
    <property type="evidence" value="ECO:0000314"/>
    <property type="project" value="MGI"/>
</dbReference>
<dbReference type="GO" id="GO:0004768">
    <property type="term" value="F:stearoyl-CoA 9-desaturase activity"/>
    <property type="evidence" value="ECO:0000314"/>
    <property type="project" value="MGI"/>
</dbReference>
<dbReference type="GO" id="GO:1903966">
    <property type="term" value="P:monounsaturated fatty acid biosynthetic process"/>
    <property type="evidence" value="ECO:0000314"/>
    <property type="project" value="MGI"/>
</dbReference>
<dbReference type="CDD" id="cd03505">
    <property type="entry name" value="Delta9-FADS-like"/>
    <property type="match status" value="1"/>
</dbReference>
<dbReference type="InterPro" id="IPR015876">
    <property type="entry name" value="Acyl-CoA_DS"/>
</dbReference>
<dbReference type="InterPro" id="IPR005804">
    <property type="entry name" value="FA_desaturase_dom"/>
</dbReference>
<dbReference type="InterPro" id="IPR001522">
    <property type="entry name" value="FADS-1_CS"/>
</dbReference>
<dbReference type="PANTHER" id="PTHR11351">
    <property type="entry name" value="ACYL-COA DESATURASE"/>
    <property type="match status" value="1"/>
</dbReference>
<dbReference type="PANTHER" id="PTHR11351:SF97">
    <property type="entry name" value="STEAROYL-COA DESATURASE 2"/>
    <property type="match status" value="1"/>
</dbReference>
<dbReference type="Pfam" id="PF00487">
    <property type="entry name" value="FA_desaturase"/>
    <property type="match status" value="1"/>
</dbReference>
<dbReference type="PRINTS" id="PR00075">
    <property type="entry name" value="FACDDSATRASE"/>
</dbReference>
<dbReference type="PROSITE" id="PS00476">
    <property type="entry name" value="FATTY_ACID_DESATUR_1"/>
    <property type="match status" value="1"/>
</dbReference>